<protein>
    <recommendedName>
        <fullName>Oxidation resistance protein 1</fullName>
    </recommendedName>
</protein>
<sequence>MSFSDRNDSPETPESSGTGTPVNSNRASASYITNMWTGLIRRFSSEGSFPSQADTAYDDNFNYHDGNGHNTKDGINGVFSPVRRTASPMRPPPLDPLILHGYRQGTPSSAKLLSAAVAEEIRTMVPERLRIVDDWNLIYSLEQDGASLATLYQRCRQFEGKRAGFVLVVKDLEGGVFGAYLSEYPHPAHTYFGNGECFLWRASNITPLPPPPSADTTNLNSRNTTLAPPPPSSEANTPTHSRPASPTPSEAVRFKAFPYSGLNDFCINCETGFLSVGSGGGHYGLWLDNGLEVGHSSRCETYGNEPLSDEGTKFGVIGVELWVMGV</sequence>
<keyword id="KW-0496">Mitochondrion</keyword>
<keyword id="KW-1185">Reference proteome</keyword>
<dbReference type="EMBL" id="DS231665">
    <property type="protein sequence ID" value="ESU12472.1"/>
    <property type="molecule type" value="Genomic_DNA"/>
</dbReference>
<dbReference type="EMBL" id="HG970334">
    <property type="protein sequence ID" value="CEF88273.1"/>
    <property type="molecule type" value="Genomic_DNA"/>
</dbReference>
<dbReference type="RefSeq" id="XP_011325048.1">
    <property type="nucleotide sequence ID" value="XM_011326746.1"/>
</dbReference>
<dbReference type="SMR" id="Q4I8S2"/>
<dbReference type="FunCoup" id="Q4I8S2">
    <property type="interactions" value="16"/>
</dbReference>
<dbReference type="STRING" id="229533.Q4I8S2"/>
<dbReference type="GeneID" id="23553519"/>
<dbReference type="KEGG" id="fgr:FGSG_06386"/>
<dbReference type="VEuPathDB" id="FungiDB:FGRAMPH1_01G20185"/>
<dbReference type="eggNOG" id="KOG2372">
    <property type="taxonomic scope" value="Eukaryota"/>
</dbReference>
<dbReference type="HOGENOM" id="CLU_029204_0_1_1"/>
<dbReference type="InParanoid" id="Q4I8S2"/>
<dbReference type="OrthoDB" id="105582at110618"/>
<dbReference type="Proteomes" id="UP000070720">
    <property type="component" value="Chromosome 3"/>
</dbReference>
<dbReference type="GO" id="GO:0005739">
    <property type="term" value="C:mitochondrion"/>
    <property type="evidence" value="ECO:0007669"/>
    <property type="project" value="UniProtKB-SubCell"/>
</dbReference>
<dbReference type="GO" id="GO:0005634">
    <property type="term" value="C:nucleus"/>
    <property type="evidence" value="ECO:0007669"/>
    <property type="project" value="TreeGrafter"/>
</dbReference>
<dbReference type="GO" id="GO:0006979">
    <property type="term" value="P:response to oxidative stress"/>
    <property type="evidence" value="ECO:0007669"/>
    <property type="project" value="TreeGrafter"/>
</dbReference>
<dbReference type="InterPro" id="IPR006571">
    <property type="entry name" value="TLDc_dom"/>
</dbReference>
<dbReference type="PANTHER" id="PTHR23354:SF62">
    <property type="entry name" value="MUSTARD, ISOFORM V"/>
    <property type="match status" value="1"/>
</dbReference>
<dbReference type="PANTHER" id="PTHR23354">
    <property type="entry name" value="NUCLEOLAR PROTEIN 7/ESTROGEN RECEPTOR COACTIVATOR-RELATED"/>
    <property type="match status" value="1"/>
</dbReference>
<dbReference type="Pfam" id="PF07534">
    <property type="entry name" value="TLD"/>
    <property type="match status" value="2"/>
</dbReference>
<dbReference type="SMART" id="SM00584">
    <property type="entry name" value="TLDc"/>
    <property type="match status" value="1"/>
</dbReference>
<dbReference type="PROSITE" id="PS51886">
    <property type="entry name" value="TLDC"/>
    <property type="match status" value="1"/>
</dbReference>
<evidence type="ECO:0000250" key="1"/>
<evidence type="ECO:0000255" key="2">
    <source>
        <dbReference type="PROSITE-ProRule" id="PRU01234"/>
    </source>
</evidence>
<evidence type="ECO:0000256" key="3">
    <source>
        <dbReference type="SAM" id="MobiDB-lite"/>
    </source>
</evidence>
<evidence type="ECO:0000305" key="4"/>
<comment type="function">
    <text evidence="1">May be involved in protection from oxidative damage.</text>
</comment>
<comment type="subcellular location">
    <subcellularLocation>
        <location evidence="1">Mitochondrion</location>
    </subcellularLocation>
</comment>
<comment type="similarity">
    <text evidence="4">Belongs to the OXR1 family.</text>
</comment>
<feature type="chain" id="PRO_0000058116" description="Oxidation resistance protein 1">
    <location>
        <begin position="1"/>
        <end position="326"/>
    </location>
</feature>
<feature type="domain" description="TLDc" evidence="2">
    <location>
        <begin position="111"/>
        <end position="325"/>
    </location>
</feature>
<feature type="region of interest" description="Disordered" evidence="3">
    <location>
        <begin position="1"/>
        <end position="26"/>
    </location>
</feature>
<feature type="region of interest" description="Disordered" evidence="3">
    <location>
        <begin position="209"/>
        <end position="249"/>
    </location>
</feature>
<feature type="compositionally biased region" description="Polar residues" evidence="3">
    <location>
        <begin position="10"/>
        <end position="26"/>
    </location>
</feature>
<feature type="compositionally biased region" description="Polar residues" evidence="3">
    <location>
        <begin position="214"/>
        <end position="226"/>
    </location>
</feature>
<feature type="compositionally biased region" description="Polar residues" evidence="3">
    <location>
        <begin position="233"/>
        <end position="248"/>
    </location>
</feature>
<name>OXR1_GIBZE</name>
<organism>
    <name type="scientific">Gibberella zeae (strain ATCC MYA-4620 / CBS 123657 / FGSC 9075 / NRRL 31084 / PH-1)</name>
    <name type="common">Wheat head blight fungus</name>
    <name type="synonym">Fusarium graminearum</name>
    <dbReference type="NCBI Taxonomy" id="229533"/>
    <lineage>
        <taxon>Eukaryota</taxon>
        <taxon>Fungi</taxon>
        <taxon>Dikarya</taxon>
        <taxon>Ascomycota</taxon>
        <taxon>Pezizomycotina</taxon>
        <taxon>Sordariomycetes</taxon>
        <taxon>Hypocreomycetidae</taxon>
        <taxon>Hypocreales</taxon>
        <taxon>Nectriaceae</taxon>
        <taxon>Fusarium</taxon>
    </lineage>
</organism>
<gene>
    <name type="primary">OXR1</name>
    <name type="ORF">FGRRES_06386</name>
    <name type="ORF">FGSG_06386</name>
</gene>
<reference key="1">
    <citation type="journal article" date="2007" name="Science">
        <title>The Fusarium graminearum genome reveals a link between localized polymorphism and pathogen specialization.</title>
        <authorList>
            <person name="Cuomo C.A."/>
            <person name="Gueldener U."/>
            <person name="Xu J.-R."/>
            <person name="Trail F."/>
            <person name="Turgeon B.G."/>
            <person name="Di Pietro A."/>
            <person name="Walton J.D."/>
            <person name="Ma L.-J."/>
            <person name="Baker S.E."/>
            <person name="Rep M."/>
            <person name="Adam G."/>
            <person name="Antoniw J."/>
            <person name="Baldwin T."/>
            <person name="Calvo S.E."/>
            <person name="Chang Y.-L."/>
            <person name="DeCaprio D."/>
            <person name="Gale L.R."/>
            <person name="Gnerre S."/>
            <person name="Goswami R.S."/>
            <person name="Hammond-Kosack K."/>
            <person name="Harris L.J."/>
            <person name="Hilburn K."/>
            <person name="Kennell J.C."/>
            <person name="Kroken S."/>
            <person name="Magnuson J.K."/>
            <person name="Mannhaupt G."/>
            <person name="Mauceli E.W."/>
            <person name="Mewes H.-W."/>
            <person name="Mitterbauer R."/>
            <person name="Muehlbauer G."/>
            <person name="Muensterkoetter M."/>
            <person name="Nelson D."/>
            <person name="O'Donnell K."/>
            <person name="Ouellet T."/>
            <person name="Qi W."/>
            <person name="Quesneville H."/>
            <person name="Roncero M.I.G."/>
            <person name="Seong K.-Y."/>
            <person name="Tetko I.V."/>
            <person name="Urban M."/>
            <person name="Waalwijk C."/>
            <person name="Ward T.J."/>
            <person name="Yao J."/>
            <person name="Birren B.W."/>
            <person name="Kistler H.C."/>
        </authorList>
    </citation>
    <scope>NUCLEOTIDE SEQUENCE [LARGE SCALE GENOMIC DNA]</scope>
    <source>
        <strain>ATCC MYA-4620 / CBS 123657 / FGSC 9075 / NRRL 31084 / PH-1</strain>
    </source>
</reference>
<reference key="2">
    <citation type="journal article" date="2010" name="Nature">
        <title>Comparative genomics reveals mobile pathogenicity chromosomes in Fusarium.</title>
        <authorList>
            <person name="Ma L.-J."/>
            <person name="van der Does H.C."/>
            <person name="Borkovich K.A."/>
            <person name="Coleman J.J."/>
            <person name="Daboussi M.-J."/>
            <person name="Di Pietro A."/>
            <person name="Dufresne M."/>
            <person name="Freitag M."/>
            <person name="Grabherr M."/>
            <person name="Henrissat B."/>
            <person name="Houterman P.M."/>
            <person name="Kang S."/>
            <person name="Shim W.-B."/>
            <person name="Woloshuk C."/>
            <person name="Xie X."/>
            <person name="Xu J.-R."/>
            <person name="Antoniw J."/>
            <person name="Baker S.E."/>
            <person name="Bluhm B.H."/>
            <person name="Breakspear A."/>
            <person name="Brown D.W."/>
            <person name="Butchko R.A.E."/>
            <person name="Chapman S."/>
            <person name="Coulson R."/>
            <person name="Coutinho P.M."/>
            <person name="Danchin E.G.J."/>
            <person name="Diener A."/>
            <person name="Gale L.R."/>
            <person name="Gardiner D.M."/>
            <person name="Goff S."/>
            <person name="Hammond-Kosack K.E."/>
            <person name="Hilburn K."/>
            <person name="Hua-Van A."/>
            <person name="Jonkers W."/>
            <person name="Kazan K."/>
            <person name="Kodira C.D."/>
            <person name="Koehrsen M."/>
            <person name="Kumar L."/>
            <person name="Lee Y.-H."/>
            <person name="Li L."/>
            <person name="Manners J.M."/>
            <person name="Miranda-Saavedra D."/>
            <person name="Mukherjee M."/>
            <person name="Park G."/>
            <person name="Park J."/>
            <person name="Park S.-Y."/>
            <person name="Proctor R.H."/>
            <person name="Regev A."/>
            <person name="Ruiz-Roldan M.C."/>
            <person name="Sain D."/>
            <person name="Sakthikumar S."/>
            <person name="Sykes S."/>
            <person name="Schwartz D.C."/>
            <person name="Turgeon B.G."/>
            <person name="Wapinski I."/>
            <person name="Yoder O."/>
            <person name="Young S."/>
            <person name="Zeng Q."/>
            <person name="Zhou S."/>
            <person name="Galagan J."/>
            <person name="Cuomo C.A."/>
            <person name="Kistler H.C."/>
            <person name="Rep M."/>
        </authorList>
    </citation>
    <scope>GENOME REANNOTATION</scope>
    <source>
        <strain>ATCC MYA-4620 / CBS 123657 / FGSC 9075 / NRRL 31084 / PH-1</strain>
    </source>
</reference>
<reference key="3">
    <citation type="journal article" date="2015" name="BMC Genomics">
        <title>The completed genome sequence of the pathogenic ascomycete fungus Fusarium graminearum.</title>
        <authorList>
            <person name="King R."/>
            <person name="Urban M."/>
            <person name="Hammond-Kosack M.C.U."/>
            <person name="Hassani-Pak K."/>
            <person name="Hammond-Kosack K.E."/>
        </authorList>
    </citation>
    <scope>NUCLEOTIDE SEQUENCE [LARGE SCALE GENOMIC DNA]</scope>
    <source>
        <strain>ATCC MYA-4620 / CBS 123657 / FGSC 9075 / NRRL 31084 / PH-1</strain>
    </source>
</reference>
<accession>Q4I8S2</accession>
<accession>A0A0E0SPB0</accession>
<accession>V6RER0</accession>
<proteinExistence type="inferred from homology"/>